<reference key="1">
    <citation type="submission" date="2008-02" db="EMBL/GenBank/DDBJ databases">
        <title>Complete sequence of Haemophilus somnus 2336.</title>
        <authorList>
            <consortium name="US DOE Joint Genome Institute"/>
            <person name="Siddaramappa S."/>
            <person name="Duncan A.J."/>
            <person name="Challacombe J.F."/>
            <person name="Rainey D."/>
            <person name="Gillaspy A.F."/>
            <person name="Carson M."/>
            <person name="Gipson J."/>
            <person name="Gipson M."/>
            <person name="Bruce D."/>
            <person name="Detter J.C."/>
            <person name="Han C.S."/>
            <person name="Land M."/>
            <person name="Tapia R."/>
            <person name="Thompson L.S."/>
            <person name="Orvis J."/>
            <person name="Zaitshik J."/>
            <person name="Barnes G."/>
            <person name="Brettin T.S."/>
            <person name="Dyer D.W."/>
            <person name="Inzana T.J."/>
        </authorList>
    </citation>
    <scope>NUCLEOTIDE SEQUENCE [LARGE SCALE GENOMIC DNA]</scope>
    <source>
        <strain>2336</strain>
    </source>
</reference>
<name>METJ_HISS2</name>
<protein>
    <recommendedName>
        <fullName evidence="1">Met repressor</fullName>
    </recommendedName>
    <alternativeName>
        <fullName evidence="1">Met regulon regulatory protein MetJ</fullName>
    </alternativeName>
</protein>
<sequence length="105" mass="12258">MADWDGKYISPYAEHGKKSEQVKKITVSIPIKVLEILTNERTRRQLRNLRHATNSELLCEAFLHAFTGQPLPTDEDLLKERHDEIPESAKQIMRELGINPDDWEY</sequence>
<evidence type="ECO:0000255" key="1">
    <source>
        <dbReference type="HAMAP-Rule" id="MF_00744"/>
    </source>
</evidence>
<dbReference type="EMBL" id="CP000947">
    <property type="protein sequence ID" value="ACA32438.1"/>
    <property type="molecule type" value="Genomic_DNA"/>
</dbReference>
<dbReference type="RefSeq" id="WP_011608626.1">
    <property type="nucleotide sequence ID" value="NC_010519.1"/>
</dbReference>
<dbReference type="SMR" id="B0USK7"/>
<dbReference type="STRING" id="228400.HSM_0768"/>
<dbReference type="GeneID" id="31487057"/>
<dbReference type="KEGG" id="hsm:HSM_0768"/>
<dbReference type="HOGENOM" id="CLU_142318_0_0_6"/>
<dbReference type="GO" id="GO:0005737">
    <property type="term" value="C:cytoplasm"/>
    <property type="evidence" value="ECO:0007669"/>
    <property type="project" value="UniProtKB-SubCell"/>
</dbReference>
<dbReference type="GO" id="GO:0003677">
    <property type="term" value="F:DNA binding"/>
    <property type="evidence" value="ECO:0007669"/>
    <property type="project" value="UniProtKB-KW"/>
</dbReference>
<dbReference type="GO" id="GO:0003700">
    <property type="term" value="F:DNA-binding transcription factor activity"/>
    <property type="evidence" value="ECO:0007669"/>
    <property type="project" value="InterPro"/>
</dbReference>
<dbReference type="GO" id="GO:0009086">
    <property type="term" value="P:methionine biosynthetic process"/>
    <property type="evidence" value="ECO:0007669"/>
    <property type="project" value="UniProtKB-UniRule"/>
</dbReference>
<dbReference type="GO" id="GO:0045892">
    <property type="term" value="P:negative regulation of DNA-templated transcription"/>
    <property type="evidence" value="ECO:0007669"/>
    <property type="project" value="UniProtKB-UniRule"/>
</dbReference>
<dbReference type="CDD" id="cd00490">
    <property type="entry name" value="Met_repressor_MetJ"/>
    <property type="match status" value="1"/>
</dbReference>
<dbReference type="Gene3D" id="1.10.140.10">
    <property type="entry name" value="MET Apo-Repressor, subunit A"/>
    <property type="match status" value="1"/>
</dbReference>
<dbReference type="HAMAP" id="MF_00744">
    <property type="entry name" value="MetJ"/>
    <property type="match status" value="1"/>
</dbReference>
<dbReference type="InterPro" id="IPR002084">
    <property type="entry name" value="Met_repressor_MetJ"/>
</dbReference>
<dbReference type="InterPro" id="IPR023453">
    <property type="entry name" value="Met_repressor_MetJ_dom_sf"/>
</dbReference>
<dbReference type="InterPro" id="IPR010985">
    <property type="entry name" value="Ribbon_hlx_hlx"/>
</dbReference>
<dbReference type="NCBIfam" id="NF003622">
    <property type="entry name" value="PRK05264.1"/>
    <property type="match status" value="1"/>
</dbReference>
<dbReference type="Pfam" id="PF01340">
    <property type="entry name" value="MetJ"/>
    <property type="match status" value="1"/>
</dbReference>
<dbReference type="SUPFAM" id="SSF47598">
    <property type="entry name" value="Ribbon-helix-helix"/>
    <property type="match status" value="1"/>
</dbReference>
<accession>B0USK7</accession>
<comment type="function">
    <text evidence="1">This regulatory protein, when combined with SAM (S-adenosylmethionine) represses the expression of the methionine regulon and of enzymes involved in SAM synthesis.</text>
</comment>
<comment type="subunit">
    <text evidence="1">Homodimer.</text>
</comment>
<comment type="subcellular location">
    <subcellularLocation>
        <location evidence="1">Cytoplasm</location>
    </subcellularLocation>
</comment>
<comment type="domain">
    <text>Does not bind DNA by a helix-turn-helix motif.</text>
</comment>
<comment type="similarity">
    <text evidence="1">Belongs to the MetJ family.</text>
</comment>
<feature type="chain" id="PRO_1000083474" description="Met repressor">
    <location>
        <begin position="1"/>
        <end position="105"/>
    </location>
</feature>
<proteinExistence type="inferred from homology"/>
<organism>
    <name type="scientific">Histophilus somni (strain 2336)</name>
    <name type="common">Haemophilus somnus</name>
    <dbReference type="NCBI Taxonomy" id="228400"/>
    <lineage>
        <taxon>Bacteria</taxon>
        <taxon>Pseudomonadati</taxon>
        <taxon>Pseudomonadota</taxon>
        <taxon>Gammaproteobacteria</taxon>
        <taxon>Pasteurellales</taxon>
        <taxon>Pasteurellaceae</taxon>
        <taxon>Histophilus</taxon>
    </lineage>
</organism>
<gene>
    <name evidence="1" type="primary">metJ</name>
    <name type="ordered locus">HSM_0768</name>
</gene>
<keyword id="KW-0028">Amino-acid biosynthesis</keyword>
<keyword id="KW-0963">Cytoplasm</keyword>
<keyword id="KW-0238">DNA-binding</keyword>
<keyword id="KW-0486">Methionine biosynthesis</keyword>
<keyword id="KW-0678">Repressor</keyword>
<keyword id="KW-0804">Transcription</keyword>
<keyword id="KW-0805">Transcription regulation</keyword>